<comment type="function">
    <text evidence="5">Snake venom phospholipase A2 (PLA2) that can cleave arachidonate at the sn-2 position from phospholipides in the micellar state or in bilayer membranes. PLA2 catalyzes the calcium-dependent hydrolysis of the 2-acyl groups in 3-sn-phosphoglycerides.</text>
</comment>
<comment type="catalytic activity">
    <reaction evidence="3 4">
        <text>a 1,2-diacyl-sn-glycero-3-phosphocholine + H2O = a 1-acyl-sn-glycero-3-phosphocholine + a fatty acid + H(+)</text>
        <dbReference type="Rhea" id="RHEA:15801"/>
        <dbReference type="ChEBI" id="CHEBI:15377"/>
        <dbReference type="ChEBI" id="CHEBI:15378"/>
        <dbReference type="ChEBI" id="CHEBI:28868"/>
        <dbReference type="ChEBI" id="CHEBI:57643"/>
        <dbReference type="ChEBI" id="CHEBI:58168"/>
        <dbReference type="EC" id="3.1.1.4"/>
    </reaction>
</comment>
<comment type="cofactor">
    <cofactor evidence="1">
        <name>Ca(2+)</name>
        <dbReference type="ChEBI" id="CHEBI:29108"/>
    </cofactor>
    <text evidence="1">Binds 1 Ca(2+) ion.</text>
</comment>
<comment type="subcellular location">
    <subcellularLocation>
        <location evidence="1">Secreted</location>
    </subcellularLocation>
</comment>
<comment type="tissue specificity">
    <text>Expressed by the venom gland.</text>
</comment>
<comment type="miscellaneous">
    <text evidence="7">Negative results: does not induce edema.</text>
</comment>
<comment type="similarity">
    <text evidence="6">Belongs to the phospholipase A2 family. Group II subfamily. D49 sub-subfamily.</text>
</comment>
<name>PA2BY_PROFL</name>
<organism>
    <name type="scientific">Protobothrops flavoviridis</name>
    <name type="common">Habu</name>
    <name type="synonym">Trimeresurus flavoviridis</name>
    <dbReference type="NCBI Taxonomy" id="88087"/>
    <lineage>
        <taxon>Eukaryota</taxon>
        <taxon>Metazoa</taxon>
        <taxon>Chordata</taxon>
        <taxon>Craniata</taxon>
        <taxon>Vertebrata</taxon>
        <taxon>Euteleostomi</taxon>
        <taxon>Lepidosauria</taxon>
        <taxon>Squamata</taxon>
        <taxon>Bifurcata</taxon>
        <taxon>Unidentata</taxon>
        <taxon>Episquamata</taxon>
        <taxon>Toxicofera</taxon>
        <taxon>Serpentes</taxon>
        <taxon>Colubroidea</taxon>
        <taxon>Viperidae</taxon>
        <taxon>Crotalinae</taxon>
        <taxon>Protobothrops</taxon>
    </lineage>
</organism>
<protein>
    <recommendedName>
        <fullName>Basic phospholipase A2 PL-Y</fullName>
        <shortName>PLA-Y</shortName>
        <shortName>svPLA2</shortName>
        <ecNumber>3.1.1.4</ecNumber>
    </recommendedName>
    <alternativeName>
        <fullName>Phosphatidylcholine 2-acylhydrolase</fullName>
    </alternativeName>
</protein>
<sequence length="138" mass="15729">MRTLWIMAVLLVGVEGHLLQFRKMIKKMTGKEPIVSYAFYGCYCGKGGRGKPKDATDRCCFVHDCCYEKVTGCDPKWDYYTYSLENGDIVCGGDNPCTKVVCECDKAAAICFRDNLKTYKKRYMTFPDIFCTDPTEKC</sequence>
<dbReference type="EC" id="3.1.1.4"/>
<dbReference type="EMBL" id="AB072173">
    <property type="protein sequence ID" value="BAB68546.1"/>
    <property type="molecule type" value="mRNA"/>
</dbReference>
<dbReference type="SMR" id="Q90Y77"/>
<dbReference type="GO" id="GO:0005576">
    <property type="term" value="C:extracellular region"/>
    <property type="evidence" value="ECO:0007669"/>
    <property type="project" value="UniProtKB-SubCell"/>
</dbReference>
<dbReference type="GO" id="GO:0005509">
    <property type="term" value="F:calcium ion binding"/>
    <property type="evidence" value="ECO:0007669"/>
    <property type="project" value="InterPro"/>
</dbReference>
<dbReference type="GO" id="GO:0047498">
    <property type="term" value="F:calcium-dependent phospholipase A2 activity"/>
    <property type="evidence" value="ECO:0007669"/>
    <property type="project" value="TreeGrafter"/>
</dbReference>
<dbReference type="GO" id="GO:0005543">
    <property type="term" value="F:phospholipid binding"/>
    <property type="evidence" value="ECO:0007669"/>
    <property type="project" value="TreeGrafter"/>
</dbReference>
<dbReference type="GO" id="GO:0090729">
    <property type="term" value="F:toxin activity"/>
    <property type="evidence" value="ECO:0007669"/>
    <property type="project" value="UniProtKB-KW"/>
</dbReference>
<dbReference type="GO" id="GO:0050482">
    <property type="term" value="P:arachidonate secretion"/>
    <property type="evidence" value="ECO:0007669"/>
    <property type="project" value="InterPro"/>
</dbReference>
<dbReference type="GO" id="GO:0016042">
    <property type="term" value="P:lipid catabolic process"/>
    <property type="evidence" value="ECO:0007669"/>
    <property type="project" value="UniProtKB-KW"/>
</dbReference>
<dbReference type="GO" id="GO:0042130">
    <property type="term" value="P:negative regulation of T cell proliferation"/>
    <property type="evidence" value="ECO:0007669"/>
    <property type="project" value="TreeGrafter"/>
</dbReference>
<dbReference type="GO" id="GO:0006644">
    <property type="term" value="P:phospholipid metabolic process"/>
    <property type="evidence" value="ECO:0007669"/>
    <property type="project" value="InterPro"/>
</dbReference>
<dbReference type="CDD" id="cd00125">
    <property type="entry name" value="PLA2c"/>
    <property type="match status" value="1"/>
</dbReference>
<dbReference type="FunFam" id="1.20.90.10:FF:000001">
    <property type="entry name" value="Basic phospholipase A2 homolog"/>
    <property type="match status" value="1"/>
</dbReference>
<dbReference type="Gene3D" id="1.20.90.10">
    <property type="entry name" value="Phospholipase A2 domain"/>
    <property type="match status" value="1"/>
</dbReference>
<dbReference type="InterPro" id="IPR001211">
    <property type="entry name" value="PLipase_A2"/>
</dbReference>
<dbReference type="InterPro" id="IPR033112">
    <property type="entry name" value="PLipase_A2_Asp_AS"/>
</dbReference>
<dbReference type="InterPro" id="IPR016090">
    <property type="entry name" value="PLipase_A2_dom"/>
</dbReference>
<dbReference type="InterPro" id="IPR036444">
    <property type="entry name" value="PLipase_A2_dom_sf"/>
</dbReference>
<dbReference type="InterPro" id="IPR033113">
    <property type="entry name" value="PLipase_A2_His_AS"/>
</dbReference>
<dbReference type="PANTHER" id="PTHR11716">
    <property type="entry name" value="PHOSPHOLIPASE A2 FAMILY MEMBER"/>
    <property type="match status" value="1"/>
</dbReference>
<dbReference type="PANTHER" id="PTHR11716:SF9">
    <property type="entry name" value="PHOSPHOLIPASE A2, MEMBRANE ASSOCIATED"/>
    <property type="match status" value="1"/>
</dbReference>
<dbReference type="Pfam" id="PF00068">
    <property type="entry name" value="Phospholip_A2_1"/>
    <property type="match status" value="1"/>
</dbReference>
<dbReference type="PRINTS" id="PR00389">
    <property type="entry name" value="PHPHLIPASEA2"/>
</dbReference>
<dbReference type="SMART" id="SM00085">
    <property type="entry name" value="PA2c"/>
    <property type="match status" value="1"/>
</dbReference>
<dbReference type="SUPFAM" id="SSF48619">
    <property type="entry name" value="Phospholipase A2, PLA2"/>
    <property type="match status" value="1"/>
</dbReference>
<dbReference type="PROSITE" id="PS00119">
    <property type="entry name" value="PA2_ASP"/>
    <property type="match status" value="1"/>
</dbReference>
<dbReference type="PROSITE" id="PS00118">
    <property type="entry name" value="PA2_HIS"/>
    <property type="match status" value="1"/>
</dbReference>
<reference key="1">
    <citation type="journal article" date="2003" name="J. Mol. Evol.">
        <title>Interisland evolution of Trimeresurus flavoviridis venom phospholipase A(2) isozymes.</title>
        <authorList>
            <person name="Chijiwa T."/>
            <person name="Yamaguchi Y."/>
            <person name="Ogawa T."/>
            <person name="Deshimaru M."/>
            <person name="Nobuhisa I."/>
            <person name="Nakashima K."/>
            <person name="Oda-Ueda N."/>
            <person name="Fukumaki Y."/>
            <person name="Hattori S."/>
            <person name="Ohno M."/>
        </authorList>
    </citation>
    <scope>NUCLEOTIDE SEQUENCE [MRNA]</scope>
    <scope>PROTEIN SEQUENCE OF 17-138</scope>
    <scope>FUNCTION</scope>
    <source>
        <strain>Okinawa</strain>
        <tissue>Venom</tissue>
        <tissue>Venom gland</tissue>
    </source>
</reference>
<feature type="signal peptide" evidence="5">
    <location>
        <begin position="1"/>
        <end position="16"/>
    </location>
</feature>
<feature type="chain" id="PRO_0000022958" description="Basic phospholipase A2 PL-Y">
    <location>
        <begin position="17"/>
        <end position="138"/>
    </location>
</feature>
<feature type="active site" evidence="2">
    <location>
        <position position="63"/>
    </location>
</feature>
<feature type="active site" evidence="2">
    <location>
        <position position="105"/>
    </location>
</feature>
<feature type="binding site" evidence="2">
    <location>
        <position position="43"/>
    </location>
    <ligand>
        <name>Ca(2+)</name>
        <dbReference type="ChEBI" id="CHEBI:29108"/>
    </ligand>
</feature>
<feature type="binding site" evidence="2">
    <location>
        <position position="45"/>
    </location>
    <ligand>
        <name>Ca(2+)</name>
        <dbReference type="ChEBI" id="CHEBI:29108"/>
    </ligand>
</feature>
<feature type="binding site" evidence="2">
    <location>
        <position position="47"/>
    </location>
    <ligand>
        <name>Ca(2+)</name>
        <dbReference type="ChEBI" id="CHEBI:29108"/>
    </ligand>
</feature>
<feature type="binding site" evidence="2">
    <location>
        <position position="64"/>
    </location>
    <ligand>
        <name>Ca(2+)</name>
        <dbReference type="ChEBI" id="CHEBI:29108"/>
    </ligand>
</feature>
<feature type="disulfide bond" evidence="2">
    <location>
        <begin position="42"/>
        <end position="131"/>
    </location>
</feature>
<feature type="disulfide bond" evidence="2">
    <location>
        <begin position="44"/>
        <end position="60"/>
    </location>
</feature>
<feature type="disulfide bond" evidence="2">
    <location>
        <begin position="59"/>
        <end position="111"/>
    </location>
</feature>
<feature type="disulfide bond" evidence="2">
    <location>
        <begin position="65"/>
        <end position="138"/>
    </location>
</feature>
<feature type="disulfide bond" evidence="2">
    <location>
        <begin position="66"/>
        <end position="104"/>
    </location>
</feature>
<feature type="disulfide bond" evidence="2">
    <location>
        <begin position="73"/>
        <end position="97"/>
    </location>
</feature>
<feature type="disulfide bond" evidence="2">
    <location>
        <begin position="91"/>
        <end position="102"/>
    </location>
</feature>
<keyword id="KW-0106">Calcium</keyword>
<keyword id="KW-0903">Direct protein sequencing</keyword>
<keyword id="KW-1015">Disulfide bond</keyword>
<keyword id="KW-0378">Hydrolase</keyword>
<keyword id="KW-0442">Lipid degradation</keyword>
<keyword id="KW-0443">Lipid metabolism</keyword>
<keyword id="KW-0479">Metal-binding</keyword>
<keyword id="KW-0964">Secreted</keyword>
<keyword id="KW-0732">Signal</keyword>
<keyword id="KW-0800">Toxin</keyword>
<evidence type="ECO:0000250" key="1"/>
<evidence type="ECO:0000250" key="2">
    <source>
        <dbReference type="UniProtKB" id="O42187"/>
    </source>
</evidence>
<evidence type="ECO:0000255" key="3">
    <source>
        <dbReference type="PROSITE-ProRule" id="PRU10035"/>
    </source>
</evidence>
<evidence type="ECO:0000255" key="4">
    <source>
        <dbReference type="PROSITE-ProRule" id="PRU10036"/>
    </source>
</evidence>
<evidence type="ECO:0000269" key="5">
    <source>
    </source>
</evidence>
<evidence type="ECO:0000305" key="6"/>
<evidence type="ECO:0000305" key="7">
    <source>
    </source>
</evidence>
<accession>Q90Y77</accession>
<proteinExistence type="evidence at protein level"/>